<proteinExistence type="inferred from homology"/>
<evidence type="ECO:0000255" key="1">
    <source>
        <dbReference type="HAMAP-Rule" id="MF_00204"/>
    </source>
</evidence>
<dbReference type="EMBL" id="CP001185">
    <property type="protein sequence ID" value="ACJ74651.1"/>
    <property type="molecule type" value="Genomic_DNA"/>
</dbReference>
<dbReference type="RefSeq" id="WP_012579372.1">
    <property type="nucleotide sequence ID" value="NC_011653.1"/>
</dbReference>
<dbReference type="SMR" id="B7IEY7"/>
<dbReference type="STRING" id="484019.THA_143"/>
<dbReference type="KEGG" id="taf:THA_143"/>
<dbReference type="eggNOG" id="COG0556">
    <property type="taxonomic scope" value="Bacteria"/>
</dbReference>
<dbReference type="HOGENOM" id="CLU_009621_2_1_0"/>
<dbReference type="OrthoDB" id="9806651at2"/>
<dbReference type="Proteomes" id="UP000002453">
    <property type="component" value="Chromosome"/>
</dbReference>
<dbReference type="GO" id="GO:0005737">
    <property type="term" value="C:cytoplasm"/>
    <property type="evidence" value="ECO:0007669"/>
    <property type="project" value="UniProtKB-SubCell"/>
</dbReference>
<dbReference type="GO" id="GO:0009380">
    <property type="term" value="C:excinuclease repair complex"/>
    <property type="evidence" value="ECO:0007669"/>
    <property type="project" value="InterPro"/>
</dbReference>
<dbReference type="GO" id="GO:0005524">
    <property type="term" value="F:ATP binding"/>
    <property type="evidence" value="ECO:0007669"/>
    <property type="project" value="UniProtKB-UniRule"/>
</dbReference>
<dbReference type="GO" id="GO:0016887">
    <property type="term" value="F:ATP hydrolysis activity"/>
    <property type="evidence" value="ECO:0007669"/>
    <property type="project" value="InterPro"/>
</dbReference>
<dbReference type="GO" id="GO:0003677">
    <property type="term" value="F:DNA binding"/>
    <property type="evidence" value="ECO:0007669"/>
    <property type="project" value="UniProtKB-UniRule"/>
</dbReference>
<dbReference type="GO" id="GO:0009381">
    <property type="term" value="F:excinuclease ABC activity"/>
    <property type="evidence" value="ECO:0007669"/>
    <property type="project" value="UniProtKB-UniRule"/>
</dbReference>
<dbReference type="GO" id="GO:0004386">
    <property type="term" value="F:helicase activity"/>
    <property type="evidence" value="ECO:0007669"/>
    <property type="project" value="UniProtKB-KW"/>
</dbReference>
<dbReference type="GO" id="GO:0006289">
    <property type="term" value="P:nucleotide-excision repair"/>
    <property type="evidence" value="ECO:0007669"/>
    <property type="project" value="UniProtKB-UniRule"/>
</dbReference>
<dbReference type="GO" id="GO:0009432">
    <property type="term" value="P:SOS response"/>
    <property type="evidence" value="ECO:0007669"/>
    <property type="project" value="UniProtKB-UniRule"/>
</dbReference>
<dbReference type="CDD" id="cd17916">
    <property type="entry name" value="DEXHc_UvrB"/>
    <property type="match status" value="1"/>
</dbReference>
<dbReference type="CDD" id="cd18790">
    <property type="entry name" value="SF2_C_UvrB"/>
    <property type="match status" value="1"/>
</dbReference>
<dbReference type="Gene3D" id="3.40.50.300">
    <property type="entry name" value="P-loop containing nucleotide triphosphate hydrolases"/>
    <property type="match status" value="3"/>
</dbReference>
<dbReference type="Gene3D" id="4.10.860.10">
    <property type="entry name" value="UVR domain"/>
    <property type="match status" value="1"/>
</dbReference>
<dbReference type="HAMAP" id="MF_00204">
    <property type="entry name" value="UvrB"/>
    <property type="match status" value="1"/>
</dbReference>
<dbReference type="InterPro" id="IPR006935">
    <property type="entry name" value="Helicase/UvrB_N"/>
</dbReference>
<dbReference type="InterPro" id="IPR014001">
    <property type="entry name" value="Helicase_ATP-bd"/>
</dbReference>
<dbReference type="InterPro" id="IPR001650">
    <property type="entry name" value="Helicase_C-like"/>
</dbReference>
<dbReference type="InterPro" id="IPR027417">
    <property type="entry name" value="P-loop_NTPase"/>
</dbReference>
<dbReference type="InterPro" id="IPR001943">
    <property type="entry name" value="UVR_dom"/>
</dbReference>
<dbReference type="InterPro" id="IPR036876">
    <property type="entry name" value="UVR_dom_sf"/>
</dbReference>
<dbReference type="InterPro" id="IPR004807">
    <property type="entry name" value="UvrB"/>
</dbReference>
<dbReference type="InterPro" id="IPR041471">
    <property type="entry name" value="UvrB_inter"/>
</dbReference>
<dbReference type="InterPro" id="IPR024759">
    <property type="entry name" value="UvrB_YAD/RRR_dom"/>
</dbReference>
<dbReference type="NCBIfam" id="NF003673">
    <property type="entry name" value="PRK05298.1"/>
    <property type="match status" value="1"/>
</dbReference>
<dbReference type="NCBIfam" id="TIGR00631">
    <property type="entry name" value="uvrb"/>
    <property type="match status" value="1"/>
</dbReference>
<dbReference type="PANTHER" id="PTHR24029">
    <property type="entry name" value="UVRABC SYSTEM PROTEIN B"/>
    <property type="match status" value="1"/>
</dbReference>
<dbReference type="PANTHER" id="PTHR24029:SF0">
    <property type="entry name" value="UVRABC SYSTEM PROTEIN B"/>
    <property type="match status" value="1"/>
</dbReference>
<dbReference type="Pfam" id="PF00271">
    <property type="entry name" value="Helicase_C"/>
    <property type="match status" value="1"/>
</dbReference>
<dbReference type="Pfam" id="PF04851">
    <property type="entry name" value="ResIII"/>
    <property type="match status" value="1"/>
</dbReference>
<dbReference type="Pfam" id="PF02151">
    <property type="entry name" value="UVR"/>
    <property type="match status" value="1"/>
</dbReference>
<dbReference type="Pfam" id="PF12344">
    <property type="entry name" value="UvrB"/>
    <property type="match status" value="1"/>
</dbReference>
<dbReference type="Pfam" id="PF17757">
    <property type="entry name" value="UvrB_inter"/>
    <property type="match status" value="1"/>
</dbReference>
<dbReference type="SMART" id="SM00487">
    <property type="entry name" value="DEXDc"/>
    <property type="match status" value="1"/>
</dbReference>
<dbReference type="SMART" id="SM00490">
    <property type="entry name" value="HELICc"/>
    <property type="match status" value="1"/>
</dbReference>
<dbReference type="SUPFAM" id="SSF46600">
    <property type="entry name" value="C-terminal UvrC-binding domain of UvrB"/>
    <property type="match status" value="1"/>
</dbReference>
<dbReference type="SUPFAM" id="SSF52540">
    <property type="entry name" value="P-loop containing nucleoside triphosphate hydrolases"/>
    <property type="match status" value="2"/>
</dbReference>
<dbReference type="PROSITE" id="PS51192">
    <property type="entry name" value="HELICASE_ATP_BIND_1"/>
    <property type="match status" value="1"/>
</dbReference>
<dbReference type="PROSITE" id="PS51194">
    <property type="entry name" value="HELICASE_CTER"/>
    <property type="match status" value="1"/>
</dbReference>
<dbReference type="PROSITE" id="PS50151">
    <property type="entry name" value="UVR"/>
    <property type="match status" value="1"/>
</dbReference>
<protein>
    <recommendedName>
        <fullName evidence="1">UvrABC system protein B</fullName>
        <shortName evidence="1">Protein UvrB</shortName>
    </recommendedName>
    <alternativeName>
        <fullName evidence="1">Excinuclease ABC subunit B</fullName>
    </alternativeName>
</protein>
<keyword id="KW-0067">ATP-binding</keyword>
<keyword id="KW-0963">Cytoplasm</keyword>
<keyword id="KW-0227">DNA damage</keyword>
<keyword id="KW-0228">DNA excision</keyword>
<keyword id="KW-0234">DNA repair</keyword>
<keyword id="KW-0267">Excision nuclease</keyword>
<keyword id="KW-0347">Helicase</keyword>
<keyword id="KW-0378">Hydrolase</keyword>
<keyword id="KW-0547">Nucleotide-binding</keyword>
<keyword id="KW-1185">Reference proteome</keyword>
<keyword id="KW-0742">SOS response</keyword>
<organism>
    <name type="scientific">Thermosipho africanus (strain TCF52B)</name>
    <dbReference type="NCBI Taxonomy" id="484019"/>
    <lineage>
        <taxon>Bacteria</taxon>
        <taxon>Thermotogati</taxon>
        <taxon>Thermotogota</taxon>
        <taxon>Thermotogae</taxon>
        <taxon>Thermotogales</taxon>
        <taxon>Fervidobacteriaceae</taxon>
        <taxon>Thermosipho</taxon>
    </lineage>
</organism>
<accession>B7IEY7</accession>
<feature type="chain" id="PRO_1000200560" description="UvrABC system protein B">
    <location>
        <begin position="1"/>
        <end position="661"/>
    </location>
</feature>
<feature type="domain" description="Helicase ATP-binding" evidence="1">
    <location>
        <begin position="23"/>
        <end position="180"/>
    </location>
</feature>
<feature type="domain" description="Helicase C-terminal" evidence="1">
    <location>
        <begin position="426"/>
        <end position="592"/>
    </location>
</feature>
<feature type="domain" description="UVR" evidence="1">
    <location>
        <begin position="620"/>
        <end position="655"/>
    </location>
</feature>
<feature type="short sequence motif" description="Beta-hairpin">
    <location>
        <begin position="89"/>
        <end position="112"/>
    </location>
</feature>
<feature type="binding site" evidence="1">
    <location>
        <begin position="36"/>
        <end position="43"/>
    </location>
    <ligand>
        <name>ATP</name>
        <dbReference type="ChEBI" id="CHEBI:30616"/>
    </ligand>
</feature>
<comment type="function">
    <text evidence="1">The UvrABC repair system catalyzes the recognition and processing of DNA lesions. A damage recognition complex composed of 2 UvrA and 2 UvrB subunits scans DNA for abnormalities. Upon binding of the UvrA(2)B(2) complex to a putative damaged site, the DNA wraps around one UvrB monomer. DNA wrap is dependent on ATP binding by UvrB and probably causes local melting of the DNA helix, facilitating insertion of UvrB beta-hairpin between the DNA strands. Then UvrB probes one DNA strand for the presence of a lesion. If a lesion is found the UvrA subunits dissociate and the UvrB-DNA preincision complex is formed. This complex is subsequently bound by UvrC and the second UvrB is released. If no lesion is found, the DNA wraps around the other UvrB subunit that will check the other stand for damage.</text>
</comment>
<comment type="subunit">
    <text evidence="1">Forms a heterotetramer with UvrA during the search for lesions. Interacts with UvrC in an incision complex.</text>
</comment>
<comment type="subcellular location">
    <subcellularLocation>
        <location evidence="1">Cytoplasm</location>
    </subcellularLocation>
</comment>
<comment type="domain">
    <text evidence="1">The beta-hairpin motif is involved in DNA binding.</text>
</comment>
<comment type="similarity">
    <text evidence="1">Belongs to the UvrB family.</text>
</comment>
<name>UVRB_THEAB</name>
<reference key="1">
    <citation type="journal article" date="2009" name="J. Bacteriol.">
        <title>The genome of Thermosipho africanus TCF52B: lateral genetic connections to the Firmicutes and Archaea.</title>
        <authorList>
            <person name="Nesboe C.L."/>
            <person name="Bapteste E."/>
            <person name="Curtis B."/>
            <person name="Dahle H."/>
            <person name="Lopez P."/>
            <person name="Macleod D."/>
            <person name="Dlutek M."/>
            <person name="Bowman S."/>
            <person name="Zhaxybayeva O."/>
            <person name="Birkeland N.-K."/>
            <person name="Doolittle W.F."/>
        </authorList>
    </citation>
    <scope>NUCLEOTIDE SEQUENCE [LARGE SCALE GENOMIC DNA]</scope>
    <source>
        <strain>TCF52B</strain>
    </source>
</reference>
<gene>
    <name evidence="1" type="primary">uvrB</name>
    <name type="ordered locus">THA_143</name>
</gene>
<sequence length="661" mass="76444">MFKVYSDFSPSGDQPEAIKKLVEGLQKGYRIQTLLGVTGSGKTFTMAKVVEKVGKPTLIISPNKTLAAQLYSEFKSFFPENKVEFFVSYYDYYQPEAYIPTRDLYIEKNADINEVIEKMRISAIKSIMTRKDVIVVASVSAIYNCGDPKDFSDLNFVLSVGQEIDLEGFLTHLARIGYERKEEVALGGTFRVKGDVIEIYPRYQDEGIRIELFGDEIDSIYTFDPLNRKILEKLDRVVIYPTKEFITTEEKIQRAVKSILKELEEQLEYFKKQGKHLEAERLKQRTMNDIELLTALGYCSGIENYSRHFDGRNPGDPPYSLLDYFGDDYLVFIDESHITIPQLRAMYRGDFSRKKNLVDYGFRLPCAYDNRPLKFEEFWNKVKNVIFVSATPGDFEINNSQQVVEQIIRPTGLVDPEVEVRPTQNQIDDLVNEIAKIRKRNERALVTVLTKKTAEKLAEYLIEMGIKALYIHSELDTIERVEVLKKLRRGDVEVVVGVNLLREGLDLPEVSLVAILDSDTEGFLRSETTLIQIIGRVARNINGKVIMYADKITPAMKKAIDETNRRRKIQIEYNKKHGITPKTIIKPLDEEIFKQFMTDEDEEKEEIKTIFELKESLSIEEYIALLEEEMYKAASELRYEDAARLRDELFNIREKLKNKSF</sequence>